<keyword id="KW-0281">Fimbrium</keyword>
<gene>
    <name type="primary">mrkF</name>
</gene>
<name>MRKF_KLEPN</name>
<organism>
    <name type="scientific">Klebsiella pneumoniae</name>
    <dbReference type="NCBI Taxonomy" id="573"/>
    <lineage>
        <taxon>Bacteria</taxon>
        <taxon>Pseudomonadati</taxon>
        <taxon>Pseudomonadota</taxon>
        <taxon>Gammaproteobacteria</taxon>
        <taxon>Enterobacterales</taxon>
        <taxon>Enterobacteriaceae</taxon>
        <taxon>Klebsiella/Raoultella group</taxon>
        <taxon>Klebsiella</taxon>
        <taxon>Klebsiella pneumoniae complex</taxon>
    </lineage>
</organism>
<proteinExistence type="predicted"/>
<reference key="1">
    <citation type="journal article" date="1991" name="J. Bacteriol.">
        <title>Nucleotide sequence and functions of mrk determinants necessary for expression of type 3 fimbriae in Klebsiella pneumoniae.</title>
        <authorList>
            <person name="Allen B.L."/>
            <person name="Gerlach G.-F."/>
            <person name="Clegg S."/>
        </authorList>
    </citation>
    <scope>NUCLEOTIDE SEQUENCE [GENOMIC DNA]</scope>
    <source>
        <strain>IA565</strain>
    </source>
</reference>
<feature type="chain" id="PRO_0000096575" description="Protein MrkF">
    <location>
        <begin position="1"/>
        <end position="132"/>
    </location>
</feature>
<comment type="function">
    <text>Appears to affect the stability of the intact fimbriae on the cell surface.</text>
</comment>
<comment type="subcellular location">
    <subcellularLocation>
        <location>Fimbrium</location>
    </subcellularLocation>
</comment>
<sequence length="132" mass="14531">MKPQPFTLELSNCQLRHDGGAADKDEVRMVNVRWIDGFMVNSVSNENAGYLANTRADGASHIFLALSTNDNNTLNKSNKIVPADPQQNRVPLVEKAVDGGIFTYYIGYVTPAPEKATSGPLTSWATWELVYN</sequence>
<dbReference type="EMBL" id="M55912">
    <property type="protein sequence ID" value="AAA25097.1"/>
    <property type="molecule type" value="Genomic_DNA"/>
</dbReference>
<dbReference type="PIR" id="F39142">
    <property type="entry name" value="F39142"/>
</dbReference>
<dbReference type="SMR" id="P21650"/>
<dbReference type="GO" id="GO:0009289">
    <property type="term" value="C:pilus"/>
    <property type="evidence" value="ECO:0007669"/>
    <property type="project" value="UniProtKB-SubCell"/>
</dbReference>
<dbReference type="GO" id="GO:0007155">
    <property type="term" value="P:cell adhesion"/>
    <property type="evidence" value="ECO:0007669"/>
    <property type="project" value="InterPro"/>
</dbReference>
<dbReference type="Gene3D" id="2.60.40.1090">
    <property type="entry name" value="Fimbrial-type adhesion domain"/>
    <property type="match status" value="1"/>
</dbReference>
<dbReference type="InterPro" id="IPR036937">
    <property type="entry name" value="Adhesion_dom_fimbrial_sf"/>
</dbReference>
<dbReference type="InterPro" id="IPR008966">
    <property type="entry name" value="Adhesion_dom_sf"/>
</dbReference>
<dbReference type="SUPFAM" id="SSF49401">
    <property type="entry name" value="Bacterial adhesins"/>
    <property type="match status" value="1"/>
</dbReference>
<accession>P21650</accession>
<protein>
    <recommendedName>
        <fullName>Protein MrkF</fullName>
    </recommendedName>
</protein>